<dbReference type="EMBL" id="L49337">
    <property type="protein sequence ID" value="AAB81412.1"/>
    <property type="molecule type" value="Genomic_DNA"/>
</dbReference>
<dbReference type="EMBL" id="AL591688">
    <property type="protein sequence ID" value="CAC45233.1"/>
    <property type="molecule type" value="Genomic_DNA"/>
</dbReference>
<dbReference type="RefSeq" id="NP_384767.1">
    <property type="nucleotide sequence ID" value="NC_003047.1"/>
</dbReference>
<dbReference type="RefSeq" id="WP_010968731.1">
    <property type="nucleotide sequence ID" value="NC_003047.1"/>
</dbReference>
<dbReference type="SMR" id="Q52945"/>
<dbReference type="EnsemblBacteria" id="CAC45233">
    <property type="protein sequence ID" value="CAC45233"/>
    <property type="gene ID" value="SMc03029"/>
</dbReference>
<dbReference type="KEGG" id="sme:SMc03029"/>
<dbReference type="PATRIC" id="fig|266834.11.peg.2035"/>
<dbReference type="eggNOG" id="COG1677">
    <property type="taxonomic scope" value="Bacteria"/>
</dbReference>
<dbReference type="HOGENOM" id="CLU_147249_2_0_5"/>
<dbReference type="OrthoDB" id="9812413at2"/>
<dbReference type="Proteomes" id="UP000001976">
    <property type="component" value="Chromosome"/>
</dbReference>
<dbReference type="GO" id="GO:0009425">
    <property type="term" value="C:bacterial-type flagellum basal body"/>
    <property type="evidence" value="ECO:0007669"/>
    <property type="project" value="UniProtKB-SubCell"/>
</dbReference>
<dbReference type="GO" id="GO:0003774">
    <property type="term" value="F:cytoskeletal motor activity"/>
    <property type="evidence" value="ECO:0007669"/>
    <property type="project" value="InterPro"/>
</dbReference>
<dbReference type="GO" id="GO:0005198">
    <property type="term" value="F:structural molecule activity"/>
    <property type="evidence" value="ECO:0007669"/>
    <property type="project" value="InterPro"/>
</dbReference>
<dbReference type="GO" id="GO:0071973">
    <property type="term" value="P:bacterial-type flagellum-dependent cell motility"/>
    <property type="evidence" value="ECO:0007669"/>
    <property type="project" value="InterPro"/>
</dbReference>
<dbReference type="HAMAP" id="MF_00724">
    <property type="entry name" value="FliE"/>
    <property type="match status" value="1"/>
</dbReference>
<dbReference type="InterPro" id="IPR001624">
    <property type="entry name" value="FliE"/>
</dbReference>
<dbReference type="PANTHER" id="PTHR34653">
    <property type="match status" value="1"/>
</dbReference>
<dbReference type="PANTHER" id="PTHR34653:SF1">
    <property type="entry name" value="FLAGELLAR HOOK-BASAL BODY COMPLEX PROTEIN FLIE"/>
    <property type="match status" value="1"/>
</dbReference>
<dbReference type="Pfam" id="PF02049">
    <property type="entry name" value="FliE"/>
    <property type="match status" value="1"/>
</dbReference>
<accession>Q52945</accession>
<keyword id="KW-0975">Bacterial flagellum</keyword>
<keyword id="KW-1185">Reference proteome</keyword>
<gene>
    <name type="primary">fliE</name>
    <name type="ordered locus">R00661</name>
    <name type="ORF">SMc03029</name>
</gene>
<protein>
    <recommendedName>
        <fullName>Flagellar hook-basal body complex protein FliE</fullName>
    </recommendedName>
</protein>
<evidence type="ECO:0000250" key="1"/>
<evidence type="ECO:0000305" key="2"/>
<comment type="subcellular location">
    <subcellularLocation>
        <location evidence="1">Bacterial flagellum basal body</location>
    </subcellularLocation>
</comment>
<comment type="similarity">
    <text evidence="2">Belongs to the FliE family.</text>
</comment>
<name>FLIE_RHIME</name>
<sequence length="111" mass="11428">MIDAIQSVGAFSTIRETEGAGPAPSASLVMPGAGTAAPQAGSFAEVLGNMTTDAIRSMKSAEGTSLQAIRGEANTREVVDAVMSAEQSLQTAIAIRDKVVTAYLEIARMQI</sequence>
<organism>
    <name type="scientific">Rhizobium meliloti (strain 1021)</name>
    <name type="common">Ensifer meliloti</name>
    <name type="synonym">Sinorhizobium meliloti</name>
    <dbReference type="NCBI Taxonomy" id="266834"/>
    <lineage>
        <taxon>Bacteria</taxon>
        <taxon>Pseudomonadati</taxon>
        <taxon>Pseudomonadota</taxon>
        <taxon>Alphaproteobacteria</taxon>
        <taxon>Hyphomicrobiales</taxon>
        <taxon>Rhizobiaceae</taxon>
        <taxon>Sinorhizobium/Ensifer group</taxon>
        <taxon>Sinorhizobium</taxon>
    </lineage>
</organism>
<proteinExistence type="inferred from homology"/>
<feature type="chain" id="PRO_0000105561" description="Flagellar hook-basal body complex protein FliE">
    <location>
        <begin position="1"/>
        <end position="111"/>
    </location>
</feature>
<feature type="sequence conflict" description="In Ref. 1; AAB81412." evidence="2" ref="1">
    <original>P</original>
    <variation>S</variation>
    <location>
        <position position="24"/>
    </location>
</feature>
<reference key="1">
    <citation type="submission" date="1996-03" db="EMBL/GenBank/DDBJ databases">
        <authorList>
            <person name="Platzer J."/>
            <person name="Schmitt R."/>
        </authorList>
    </citation>
    <scope>NUCLEOTIDE SEQUENCE [GENOMIC DNA]</scope>
    <source>
        <strain>RU11/001</strain>
    </source>
</reference>
<reference key="2">
    <citation type="journal article" date="2001" name="Proc. Natl. Acad. Sci. U.S.A.">
        <title>Analysis of the chromosome sequence of the legume symbiont Sinorhizobium meliloti strain 1021.</title>
        <authorList>
            <person name="Capela D."/>
            <person name="Barloy-Hubler F."/>
            <person name="Gouzy J."/>
            <person name="Bothe G."/>
            <person name="Ampe F."/>
            <person name="Batut J."/>
            <person name="Boistard P."/>
            <person name="Becker A."/>
            <person name="Boutry M."/>
            <person name="Cadieu E."/>
            <person name="Dreano S."/>
            <person name="Gloux S."/>
            <person name="Godrie T."/>
            <person name="Goffeau A."/>
            <person name="Kahn D."/>
            <person name="Kiss E."/>
            <person name="Lelaure V."/>
            <person name="Masuy D."/>
            <person name="Pohl T."/>
            <person name="Portetelle D."/>
            <person name="Puehler A."/>
            <person name="Purnelle B."/>
            <person name="Ramsperger U."/>
            <person name="Renard C."/>
            <person name="Thebault P."/>
            <person name="Vandenbol M."/>
            <person name="Weidner S."/>
            <person name="Galibert F."/>
        </authorList>
    </citation>
    <scope>NUCLEOTIDE SEQUENCE [LARGE SCALE GENOMIC DNA]</scope>
    <source>
        <strain>1021</strain>
    </source>
</reference>
<reference key="3">
    <citation type="journal article" date="2001" name="Science">
        <title>The composite genome of the legume symbiont Sinorhizobium meliloti.</title>
        <authorList>
            <person name="Galibert F."/>
            <person name="Finan T.M."/>
            <person name="Long S.R."/>
            <person name="Puehler A."/>
            <person name="Abola P."/>
            <person name="Ampe F."/>
            <person name="Barloy-Hubler F."/>
            <person name="Barnett M.J."/>
            <person name="Becker A."/>
            <person name="Boistard P."/>
            <person name="Bothe G."/>
            <person name="Boutry M."/>
            <person name="Bowser L."/>
            <person name="Buhrmester J."/>
            <person name="Cadieu E."/>
            <person name="Capela D."/>
            <person name="Chain P."/>
            <person name="Cowie A."/>
            <person name="Davis R.W."/>
            <person name="Dreano S."/>
            <person name="Federspiel N.A."/>
            <person name="Fisher R.F."/>
            <person name="Gloux S."/>
            <person name="Godrie T."/>
            <person name="Goffeau A."/>
            <person name="Golding B."/>
            <person name="Gouzy J."/>
            <person name="Gurjal M."/>
            <person name="Hernandez-Lucas I."/>
            <person name="Hong A."/>
            <person name="Huizar L."/>
            <person name="Hyman R.W."/>
            <person name="Jones T."/>
            <person name="Kahn D."/>
            <person name="Kahn M.L."/>
            <person name="Kalman S."/>
            <person name="Keating D.H."/>
            <person name="Kiss E."/>
            <person name="Komp C."/>
            <person name="Lelaure V."/>
            <person name="Masuy D."/>
            <person name="Palm C."/>
            <person name="Peck M.C."/>
            <person name="Pohl T.M."/>
            <person name="Portetelle D."/>
            <person name="Purnelle B."/>
            <person name="Ramsperger U."/>
            <person name="Surzycki R."/>
            <person name="Thebault P."/>
            <person name="Vandenbol M."/>
            <person name="Vorhoelter F.J."/>
            <person name="Weidner S."/>
            <person name="Wells D.H."/>
            <person name="Wong K."/>
            <person name="Yeh K.-C."/>
            <person name="Batut J."/>
        </authorList>
    </citation>
    <scope>NUCLEOTIDE SEQUENCE [LARGE SCALE GENOMIC DNA]</scope>
    <source>
        <strain>1021</strain>
    </source>
</reference>